<comment type="function">
    <text evidence="2 4">May play a structural role in chromatin. Involved in sister chromatid cohesion, possibly by facilitating the cohesin complex loading. Transcription factor, which may promote cortical neuron migration during brain development by regulating the transcription of crucial genes in this process (By similarity).</text>
</comment>
<comment type="subcellular location">
    <subcellularLocation>
        <location evidence="2">Nucleus</location>
    </subcellularLocation>
</comment>
<comment type="developmental stage">
    <text evidence="4">Detected in the early blastula, 2.5 hours post fertilization (hpf), before the onset of zygotic gene expression, and expression progressively increases, reaching a peak at late gastrula stages (9 hpf), before decreasing by 26 hpf. Maternal transcripts are detected throughout the blastoderm. Ubiquitous expression continues until early somitogenesis (12 hpf), after which transcript levels gradually decrease in the trunk (15-18 hpf), with strong expression becoming restricted to the head by 25 hpf.</text>
</comment>
<comment type="domain">
    <text evidence="1">Contains one Pro-Xaa-Val-Xaa-Leu (PxVxL) motif, which is required for interaction with chromoshadow domains. This motif requires additional residues -7, -6, +4 and +5 of the central Val which contact the chromoshadow domain (By similarity).</text>
</comment>
<comment type="similarity">
    <text evidence="5">Belongs to the SCC2/Nipped-B family.</text>
</comment>
<comment type="sequence caution" evidence="5">
    <conflict type="erroneous gene model prediction">
        <sequence resource="EMBL-CDS" id="CAM14097"/>
    </conflict>
</comment>
<gene>
    <name type="primary">nipbla</name>
</gene>
<name>NIPLA_DANRE</name>
<evidence type="ECO:0000250" key="1">
    <source>
        <dbReference type="UniProtKB" id="Q6KC79"/>
    </source>
</evidence>
<evidence type="ECO:0000250" key="2">
    <source>
        <dbReference type="UniProtKB" id="Q6KCD5"/>
    </source>
</evidence>
<evidence type="ECO:0000256" key="3">
    <source>
        <dbReference type="SAM" id="MobiDB-lite"/>
    </source>
</evidence>
<evidence type="ECO:0000269" key="4">
    <source>
    </source>
</evidence>
<evidence type="ECO:0000305" key="5"/>
<accession>F5HSE3</accession>
<accession>A2BGN2</accession>
<accession>F1QYK3</accession>
<protein>
    <recommendedName>
        <fullName>Nipped-B-like protein A</fullName>
    </recommendedName>
</protein>
<proteinExistence type="evidence at transcript level"/>
<sequence length="2381" mass="268124">MNGDMPHVPITTLAGIAGLTDLLNQLPLPSPLPGTTTKSLLYNGRVAEDVGHLLGCRDETLVSQLANSLSQVSTEHIELKDSLGSDELEGDVPVLLQLLMSRNPNIFRNKTAPNTPQYPAQAGISQQSMAPPYKITHGSMQGSPASANYQQASMSHSPSGHFVPGQSGPGGRFLPQQGSPVPSPYAPQSPATGYRQYPHPPAYSQHQHLQQGSVASPMIPGAMRNVHENKDQMRMGFTSHLLQSSPPYTPPCDGTKDLHLGSQDKQRGQKSSEGEQDSPDKATVYDIVGSPAKDHTKLILRPSRARPAEVELGGMYPGSDPEGELVEALAAIERMESEAAMETERSAKEVQDKDKPLKKRKQDSHPQEPGAAGTAGSGSGAPGGGGGANAGHRLAPQEASAAGTSASRPGLQVSLEQAGRVEDDCMGMPIPASEAQRWPQEPQEGVTPKAVKHEHDHDPEHPHYDDKQPDTPRQKHRPEGRHGDGGAQRAAVQSGSKQVELPPYMLGENTGVLKNFTIPKIRKGELGGGDIPEGWKQPCVRLERLEADVDVKKSVKPVVVLQKLSIDEVQRLMRERDSRASKSGKNRLSSGRSGKGGIDPSVLKDLPPELLAEIESTMPLCERVKMNKRKRSTVNERPKYAEDSSEDEEFSSRKRQRKDRDRTWEAEERDRRSSGEHRRGNFDARRGSGSRYDDSDQDSPPPSLNEVARRLKMKQKKRKVYEPKLTPEEMMDSSTFKRFTLSIDNILENLEDVDFTAQDDDEIPQELLLGKQQLNELGSESAKIKAMGITSRIPSDKLVKLLNILEKNILDGASLSTLMNLDNEGEDEERLWRDLIMERVTKSADACLTALNIMTSTHMPKAVYIEDVIERVLQYTKFHLQNTLYPQYDPVYRVNPKGGSMLSSRAKRAKCSTAKQKVIIMLYNKVCDVVSNISELLEIQLMTDTTILQVSSMGITPFFVENVSELQLCAIKLVTAVFSRYEKHRQLILEEIFTSLARLPTSKRSLRNFRLNSSDDEGEPIYIQMVSALVLQLIQCVVHLPADRDSEDDHKKVDDDVFITNSYETARRTAQNFLSVFLKKCGSKQGEEDYRPLFENFVQDLLSTVNKPDWPASELLLSLLGRLLVHQFSNKQTEMALRVASLDYLGTVAARLRKDSVTSRMDQKAIERIIRENTEGDETQRLQKALLDYMDENAETDPALAFARKFYIAQWFRDCTTETEKAMRSQNQKEDDSDGAQHAKELQATGDIMQRAETRKKFLHSVVKSTPNQFTTLRMNSDTVDYDDACLIVRYLASTRPFSQSFDIYLTQILRVLGESAIAVRTKAMKCLSEVVAVDPSILARSDMQRGVHGRLMDNSTSVREAAVELLGRFVLSRPQLTEQYYDMLIERILDTGISVRKRVIKILRDICLEQPNFSKITEMCVKMIRRVNDEEGIKKLVNETFQKLWFTPTPNHDKETMNRKILNITDVVSACKDTGYDWFEQLLQNLLKSEEDSSYKPTRKACVQLVDNLVEHILKYEEALAEHKSVNSTRLVACITTLYLFSKIRAQLMVKHAMTMQPYLTTKCSSQSDFMVICNVAKILELVVPLMDHPSESFLTTIEEDLMKLILKYGMTVVQYCVSCLGAIVNKVTHNYKFVWACFNRYYGALTKLKVQHQEGTNSMALAATKAALLRSLFTAGALCRHFDFDLEQFKGTTKVVIKEKVLELLLYFTNHEDEEVKCKAIIGLGFLFIMHPSQMFVPEVKTLYNGLLSDKRSSITLKIQVLKNLQMYLQEEDTRMQEADREWQKLSKQEDLKEMGDISSGMSSSIMQLYLKQVLESFFHAQSSVRHFALNVIALTLSQGLIHPVQCVPYLIAMGTDAEPTMRNKADQQLVEIDKKYTGFIHMKAVAGMKMSYQVQQAVFGSAGSVIRGFRQDESNSAQCSHLYSMVRANRQHRRAFLISLLNLFDDSSKMEVNMLLFIADNLAYFPYQSQEEPLFIMHHIDITLSVSGSNLLQTFKESLVKIPGRKSRKRRRRRRRPQRQQPPPPPPQQQQQQNGSEEERGAQDEERERHSGDEEYDDDDYEEDEDGHRVRKPKPTEDIRQSESDSDSDLDDVDAVMERLPDDSTSLVDFARASQGILLLLVLKQHLKNLYGFSDGKIQKYSPSESAKVYDKAVNRKTLANFNPQQTIDFLRHHDVHGELTYELKRKIVKQFLDFKLLMEHLDPDEEDEDGDTSANVRNKAITALLGGAAASPRNHHTGDSEEDDERSEGEERTPGASRRGRRTGDSADLLSANMNESVSALDIIAIHCPKYRDRPQIARVIQKNSDGYSIHWMAGSYSSTWAEAKKRDGRKLVPWVDSIKETDIIYKKITLTSGNKLNHKVAQTLRSLYAAKDRNSS</sequence>
<feature type="chain" id="PRO_0000419686" description="Nipped-B-like protein A">
    <location>
        <begin position="1"/>
        <end position="2381"/>
    </location>
</feature>
<feature type="repeat" description="HEAT 1">
    <location>
        <begin position="85"/>
        <end position="124"/>
    </location>
</feature>
<feature type="repeat" description="HEAT 2">
    <location>
        <begin position="1299"/>
        <end position="1337"/>
    </location>
</feature>
<feature type="repeat" description="HEAT 3">
    <location>
        <begin position="1375"/>
        <end position="1413"/>
    </location>
</feature>
<feature type="repeat" description="HEAT 4">
    <location>
        <begin position="1477"/>
        <end position="1516"/>
    </location>
</feature>
<feature type="repeat" description="HEAT 5">
    <location>
        <begin position="1843"/>
        <end position="1881"/>
    </location>
</feature>
<feature type="region of interest" description="Disordered" evidence="3">
    <location>
        <begin position="131"/>
        <end position="211"/>
    </location>
</feature>
<feature type="region of interest" description="Disordered" evidence="3">
    <location>
        <begin position="240"/>
        <end position="289"/>
    </location>
</feature>
<feature type="region of interest" description="Disordered" evidence="3">
    <location>
        <begin position="329"/>
        <end position="503"/>
    </location>
</feature>
<feature type="region of interest" description="Disordered" evidence="3">
    <location>
        <begin position="570"/>
        <end position="604"/>
    </location>
</feature>
<feature type="region of interest" description="Disordered" evidence="3">
    <location>
        <begin position="629"/>
        <end position="708"/>
    </location>
</feature>
<feature type="region of interest" description="Disordered" evidence="3">
    <location>
        <begin position="2005"/>
        <end position="2095"/>
    </location>
</feature>
<feature type="region of interest" description="Disordered" evidence="3">
    <location>
        <begin position="2228"/>
        <end position="2271"/>
    </location>
</feature>
<feature type="short sequence motif" description="PxVxL motif" evidence="1">
    <location>
        <begin position="552"/>
        <end position="565"/>
    </location>
</feature>
<feature type="compositionally biased region" description="Polar residues" evidence="3">
    <location>
        <begin position="138"/>
        <end position="158"/>
    </location>
</feature>
<feature type="compositionally biased region" description="Basic and acidic residues" evidence="3">
    <location>
        <begin position="254"/>
        <end position="273"/>
    </location>
</feature>
<feature type="compositionally biased region" description="Basic and acidic residues" evidence="3">
    <location>
        <begin position="333"/>
        <end position="355"/>
    </location>
</feature>
<feature type="compositionally biased region" description="Gly residues" evidence="3">
    <location>
        <begin position="373"/>
        <end position="389"/>
    </location>
</feature>
<feature type="compositionally biased region" description="Basic and acidic residues" evidence="3">
    <location>
        <begin position="451"/>
        <end position="473"/>
    </location>
</feature>
<feature type="compositionally biased region" description="Basic and acidic residues" evidence="3">
    <location>
        <begin position="570"/>
        <end position="580"/>
    </location>
</feature>
<feature type="compositionally biased region" description="Polar residues" evidence="3">
    <location>
        <begin position="581"/>
        <end position="592"/>
    </location>
</feature>
<feature type="compositionally biased region" description="Basic and acidic residues" evidence="3">
    <location>
        <begin position="633"/>
        <end position="642"/>
    </location>
</feature>
<feature type="compositionally biased region" description="Basic and acidic residues" evidence="3">
    <location>
        <begin position="658"/>
        <end position="694"/>
    </location>
</feature>
<feature type="compositionally biased region" description="Basic residues" evidence="3">
    <location>
        <begin position="2006"/>
        <end position="2021"/>
    </location>
</feature>
<feature type="compositionally biased region" description="Basic and acidic residues" evidence="3">
    <location>
        <begin position="2040"/>
        <end position="2056"/>
    </location>
</feature>
<feature type="compositionally biased region" description="Acidic residues" evidence="3">
    <location>
        <begin position="2057"/>
        <end position="2068"/>
    </location>
</feature>
<feature type="compositionally biased region" description="Basic and acidic residues" evidence="3">
    <location>
        <begin position="2077"/>
        <end position="2086"/>
    </location>
</feature>
<reference key="1">
    <citation type="journal article" date="2011" name="PLoS Biol.">
        <title>Multifactorial origins of heart and gut defects in nipbl-deficient zebrafish, a model of Cornelia de Lange Syndrome.</title>
        <authorList>
            <person name="Muto A."/>
            <person name="Calof A.L."/>
            <person name="Lander A.D."/>
            <person name="Schilling T.F."/>
        </authorList>
    </citation>
    <scope>NUCLEOTIDE SEQUENCE [MRNA]</scope>
    <scope>FUNCTION</scope>
    <scope>DEVELOPMENTAL STAGE</scope>
</reference>
<reference key="2">
    <citation type="journal article" date="2013" name="Nature">
        <title>The zebrafish reference genome sequence and its relationship to the human genome.</title>
        <authorList>
            <person name="Howe K."/>
            <person name="Clark M.D."/>
            <person name="Torroja C.F."/>
            <person name="Torrance J."/>
            <person name="Berthelot C."/>
            <person name="Muffato M."/>
            <person name="Collins J.E."/>
            <person name="Humphray S."/>
            <person name="McLaren K."/>
            <person name="Matthews L."/>
            <person name="McLaren S."/>
            <person name="Sealy I."/>
            <person name="Caccamo M."/>
            <person name="Churcher C."/>
            <person name="Scott C."/>
            <person name="Barrett J.C."/>
            <person name="Koch R."/>
            <person name="Rauch G.J."/>
            <person name="White S."/>
            <person name="Chow W."/>
            <person name="Kilian B."/>
            <person name="Quintais L.T."/>
            <person name="Guerra-Assuncao J.A."/>
            <person name="Zhou Y."/>
            <person name="Gu Y."/>
            <person name="Yen J."/>
            <person name="Vogel J.H."/>
            <person name="Eyre T."/>
            <person name="Redmond S."/>
            <person name="Banerjee R."/>
            <person name="Chi J."/>
            <person name="Fu B."/>
            <person name="Langley E."/>
            <person name="Maguire S.F."/>
            <person name="Laird G.K."/>
            <person name="Lloyd D."/>
            <person name="Kenyon E."/>
            <person name="Donaldson S."/>
            <person name="Sehra H."/>
            <person name="Almeida-King J."/>
            <person name="Loveland J."/>
            <person name="Trevanion S."/>
            <person name="Jones M."/>
            <person name="Quail M."/>
            <person name="Willey D."/>
            <person name="Hunt A."/>
            <person name="Burton J."/>
            <person name="Sims S."/>
            <person name="McLay K."/>
            <person name="Plumb B."/>
            <person name="Davis J."/>
            <person name="Clee C."/>
            <person name="Oliver K."/>
            <person name="Clark R."/>
            <person name="Riddle C."/>
            <person name="Elliot D."/>
            <person name="Threadgold G."/>
            <person name="Harden G."/>
            <person name="Ware D."/>
            <person name="Begum S."/>
            <person name="Mortimore B."/>
            <person name="Kerry G."/>
            <person name="Heath P."/>
            <person name="Phillimore B."/>
            <person name="Tracey A."/>
            <person name="Corby N."/>
            <person name="Dunn M."/>
            <person name="Johnson C."/>
            <person name="Wood J."/>
            <person name="Clark S."/>
            <person name="Pelan S."/>
            <person name="Griffiths G."/>
            <person name="Smith M."/>
            <person name="Glithero R."/>
            <person name="Howden P."/>
            <person name="Barker N."/>
            <person name="Lloyd C."/>
            <person name="Stevens C."/>
            <person name="Harley J."/>
            <person name="Holt K."/>
            <person name="Panagiotidis G."/>
            <person name="Lovell J."/>
            <person name="Beasley H."/>
            <person name="Henderson C."/>
            <person name="Gordon D."/>
            <person name="Auger K."/>
            <person name="Wright D."/>
            <person name="Collins J."/>
            <person name="Raisen C."/>
            <person name="Dyer L."/>
            <person name="Leung K."/>
            <person name="Robertson L."/>
            <person name="Ambridge K."/>
            <person name="Leongamornlert D."/>
            <person name="McGuire S."/>
            <person name="Gilderthorp R."/>
            <person name="Griffiths C."/>
            <person name="Manthravadi D."/>
            <person name="Nichol S."/>
            <person name="Barker G."/>
            <person name="Whitehead S."/>
            <person name="Kay M."/>
            <person name="Brown J."/>
            <person name="Murnane C."/>
            <person name="Gray E."/>
            <person name="Humphries M."/>
            <person name="Sycamore N."/>
            <person name="Barker D."/>
            <person name="Saunders D."/>
            <person name="Wallis J."/>
            <person name="Babbage A."/>
            <person name="Hammond S."/>
            <person name="Mashreghi-Mohammadi M."/>
            <person name="Barr L."/>
            <person name="Martin S."/>
            <person name="Wray P."/>
            <person name="Ellington A."/>
            <person name="Matthews N."/>
            <person name="Ellwood M."/>
            <person name="Woodmansey R."/>
            <person name="Clark G."/>
            <person name="Cooper J."/>
            <person name="Tromans A."/>
            <person name="Grafham D."/>
            <person name="Skuce C."/>
            <person name="Pandian R."/>
            <person name="Andrews R."/>
            <person name="Harrison E."/>
            <person name="Kimberley A."/>
            <person name="Garnett J."/>
            <person name="Fosker N."/>
            <person name="Hall R."/>
            <person name="Garner P."/>
            <person name="Kelly D."/>
            <person name="Bird C."/>
            <person name="Palmer S."/>
            <person name="Gehring I."/>
            <person name="Berger A."/>
            <person name="Dooley C.M."/>
            <person name="Ersan-Urun Z."/>
            <person name="Eser C."/>
            <person name="Geiger H."/>
            <person name="Geisler M."/>
            <person name="Karotki L."/>
            <person name="Kirn A."/>
            <person name="Konantz J."/>
            <person name="Konantz M."/>
            <person name="Oberlander M."/>
            <person name="Rudolph-Geiger S."/>
            <person name="Teucke M."/>
            <person name="Lanz C."/>
            <person name="Raddatz G."/>
            <person name="Osoegawa K."/>
            <person name="Zhu B."/>
            <person name="Rapp A."/>
            <person name="Widaa S."/>
            <person name="Langford C."/>
            <person name="Yang F."/>
            <person name="Schuster S.C."/>
            <person name="Carter N.P."/>
            <person name="Harrow J."/>
            <person name="Ning Z."/>
            <person name="Herrero J."/>
            <person name="Searle S.M."/>
            <person name="Enright A."/>
            <person name="Geisler R."/>
            <person name="Plasterk R.H."/>
            <person name="Lee C."/>
            <person name="Westerfield M."/>
            <person name="de Jong P.J."/>
            <person name="Zon L.I."/>
            <person name="Postlethwait J.H."/>
            <person name="Nusslein-Volhard C."/>
            <person name="Hubbard T.J."/>
            <person name="Roest Crollius H."/>
            <person name="Rogers J."/>
            <person name="Stemple D.L."/>
        </authorList>
    </citation>
    <scope>NUCLEOTIDE SEQUENCE [LARGE SCALE GENOMIC DNA]</scope>
    <source>
        <strain>Tuebingen</strain>
    </source>
</reference>
<dbReference type="EMBL" id="AB630366">
    <property type="protein sequence ID" value="BAK23968.1"/>
    <property type="molecule type" value="mRNA"/>
</dbReference>
<dbReference type="EMBL" id="BX510907">
    <property type="protein sequence ID" value="CAM14097.2"/>
    <property type="status" value="ALT_SEQ"/>
    <property type="molecule type" value="Genomic_DNA"/>
</dbReference>
<dbReference type="RefSeq" id="NP_001233213.1">
    <property type="nucleotide sequence ID" value="NM_001246284.1"/>
</dbReference>
<dbReference type="SMR" id="F5HSE3"/>
<dbReference type="FunCoup" id="F5HSE3">
    <property type="interactions" value="707"/>
</dbReference>
<dbReference type="STRING" id="7955.ENSDARP00000132739"/>
<dbReference type="PaxDb" id="7955-ENSDARP00000117955"/>
<dbReference type="PeptideAtlas" id="F5HSE3"/>
<dbReference type="GeneID" id="570900"/>
<dbReference type="KEGG" id="dre:570900"/>
<dbReference type="AGR" id="ZFIN:ZDB-GENE-060526-121"/>
<dbReference type="CTD" id="570900"/>
<dbReference type="ZFIN" id="ZDB-GENE-060526-121">
    <property type="gene designation" value="nipbla"/>
</dbReference>
<dbReference type="eggNOG" id="KOG1020">
    <property type="taxonomic scope" value="Eukaryota"/>
</dbReference>
<dbReference type="InParanoid" id="F5HSE3"/>
<dbReference type="OrthoDB" id="418242at2759"/>
<dbReference type="PRO" id="PR:F5HSE3"/>
<dbReference type="Proteomes" id="UP000000437">
    <property type="component" value="Chromosome 5"/>
</dbReference>
<dbReference type="GO" id="GO:0090694">
    <property type="term" value="C:Scc2-Scc4 cohesin loading complex"/>
    <property type="evidence" value="ECO:0000318"/>
    <property type="project" value="GO_Central"/>
</dbReference>
<dbReference type="GO" id="GO:0003682">
    <property type="term" value="F:chromatin binding"/>
    <property type="evidence" value="ECO:0000318"/>
    <property type="project" value="GO_Central"/>
</dbReference>
<dbReference type="GO" id="GO:0140587">
    <property type="term" value="F:chromatin loop anchoring activity"/>
    <property type="evidence" value="ECO:0000316"/>
    <property type="project" value="ZFIN"/>
</dbReference>
<dbReference type="GO" id="GO:0061775">
    <property type="term" value="F:cohesin loader activity"/>
    <property type="evidence" value="ECO:0007669"/>
    <property type="project" value="InterPro"/>
</dbReference>
<dbReference type="GO" id="GO:0007420">
    <property type="term" value="P:brain development"/>
    <property type="evidence" value="ECO:0000318"/>
    <property type="project" value="GO_Central"/>
</dbReference>
<dbReference type="GO" id="GO:0140588">
    <property type="term" value="P:chromatin looping"/>
    <property type="evidence" value="ECO:0007669"/>
    <property type="project" value="InterPro"/>
</dbReference>
<dbReference type="GO" id="GO:0048565">
    <property type="term" value="P:digestive tract development"/>
    <property type="evidence" value="ECO:0000316"/>
    <property type="project" value="ZFIN"/>
</dbReference>
<dbReference type="GO" id="GO:0035118">
    <property type="term" value="P:embryonic pectoral fin morphogenesis"/>
    <property type="evidence" value="ECO:0000316"/>
    <property type="project" value="ZFIN"/>
</dbReference>
<dbReference type="GO" id="GO:0048703">
    <property type="term" value="P:embryonic viscerocranium morphogenesis"/>
    <property type="evidence" value="ECO:0000316"/>
    <property type="project" value="ZFIN"/>
</dbReference>
<dbReference type="GO" id="GO:0034087">
    <property type="term" value="P:establishment of mitotic sister chromatid cohesion"/>
    <property type="evidence" value="ECO:0000318"/>
    <property type="project" value="GO_Central"/>
</dbReference>
<dbReference type="GO" id="GO:0071169">
    <property type="term" value="P:establishment of protein localization to chromatin"/>
    <property type="evidence" value="ECO:0000318"/>
    <property type="project" value="GO_Central"/>
</dbReference>
<dbReference type="GO" id="GO:0007507">
    <property type="term" value="P:heart development"/>
    <property type="evidence" value="ECO:0000315"/>
    <property type="project" value="ZFIN"/>
</dbReference>
<dbReference type="GO" id="GO:0003146">
    <property type="term" value="P:heart jogging"/>
    <property type="evidence" value="ECO:0000315"/>
    <property type="project" value="ZFIN"/>
</dbReference>
<dbReference type="GO" id="GO:0003007">
    <property type="term" value="P:heart morphogenesis"/>
    <property type="evidence" value="ECO:0000318"/>
    <property type="project" value="GO_Central"/>
</dbReference>
<dbReference type="GO" id="GO:0007064">
    <property type="term" value="P:mitotic sister chromatid cohesion"/>
    <property type="evidence" value="ECO:0000250"/>
    <property type="project" value="UniProtKB"/>
</dbReference>
<dbReference type="GO" id="GO:0010468">
    <property type="term" value="P:regulation of gene expression"/>
    <property type="evidence" value="ECO:0007669"/>
    <property type="project" value="InterPro"/>
</dbReference>
<dbReference type="GO" id="GO:1990414">
    <property type="term" value="P:replication-born double-strand break repair via sister chromatid exchange"/>
    <property type="evidence" value="ECO:0000318"/>
    <property type="project" value="GO_Central"/>
</dbReference>
<dbReference type="CDD" id="cd23958">
    <property type="entry name" value="SCC2"/>
    <property type="match status" value="1"/>
</dbReference>
<dbReference type="FunFam" id="1.25.10.10:FF:000225">
    <property type="entry name" value="Nipped-B protein"/>
    <property type="match status" value="1"/>
</dbReference>
<dbReference type="Gene3D" id="1.25.10.10">
    <property type="entry name" value="Leucine-rich Repeat Variant"/>
    <property type="match status" value="2"/>
</dbReference>
<dbReference type="InterPro" id="IPR011989">
    <property type="entry name" value="ARM-like"/>
</dbReference>
<dbReference type="InterPro" id="IPR016024">
    <property type="entry name" value="ARM-type_fold"/>
</dbReference>
<dbReference type="InterPro" id="IPR026003">
    <property type="entry name" value="Cohesin_HEAT"/>
</dbReference>
<dbReference type="InterPro" id="IPR024986">
    <property type="entry name" value="Nipped-B_C"/>
</dbReference>
<dbReference type="InterPro" id="IPR033031">
    <property type="entry name" value="Scc2/Nipped-B"/>
</dbReference>
<dbReference type="PANTHER" id="PTHR21704:SF18">
    <property type="entry name" value="NIPPED-B-LIKE PROTEIN"/>
    <property type="match status" value="1"/>
</dbReference>
<dbReference type="PANTHER" id="PTHR21704">
    <property type="entry name" value="NIPPED-B-LIKE PROTEIN DELANGIN SCC2-RELATED"/>
    <property type="match status" value="1"/>
</dbReference>
<dbReference type="Pfam" id="PF12765">
    <property type="entry name" value="Cohesin_HEAT"/>
    <property type="match status" value="1"/>
</dbReference>
<dbReference type="Pfam" id="PF12830">
    <property type="entry name" value="Nipped-B_C"/>
    <property type="match status" value="1"/>
</dbReference>
<dbReference type="SUPFAM" id="SSF48371">
    <property type="entry name" value="ARM repeat"/>
    <property type="match status" value="2"/>
</dbReference>
<keyword id="KW-0010">Activator</keyword>
<keyword id="KW-0131">Cell cycle</keyword>
<keyword id="KW-0217">Developmental protein</keyword>
<keyword id="KW-0539">Nucleus</keyword>
<keyword id="KW-1185">Reference proteome</keyword>
<keyword id="KW-0677">Repeat</keyword>
<keyword id="KW-0804">Transcription</keyword>
<keyword id="KW-0805">Transcription regulation</keyword>
<organism>
    <name type="scientific">Danio rerio</name>
    <name type="common">Zebrafish</name>
    <name type="synonym">Brachydanio rerio</name>
    <dbReference type="NCBI Taxonomy" id="7955"/>
    <lineage>
        <taxon>Eukaryota</taxon>
        <taxon>Metazoa</taxon>
        <taxon>Chordata</taxon>
        <taxon>Craniata</taxon>
        <taxon>Vertebrata</taxon>
        <taxon>Euteleostomi</taxon>
        <taxon>Actinopterygii</taxon>
        <taxon>Neopterygii</taxon>
        <taxon>Teleostei</taxon>
        <taxon>Ostariophysi</taxon>
        <taxon>Cypriniformes</taxon>
        <taxon>Danionidae</taxon>
        <taxon>Danioninae</taxon>
        <taxon>Danio</taxon>
    </lineage>
</organism>